<evidence type="ECO:0000250" key="1"/>
<evidence type="ECO:0000305" key="2"/>
<name>NIFK_FRAAL</name>
<gene>
    <name type="primary">nifK</name>
</gene>
<protein>
    <recommendedName>
        <fullName>Nitrogenase molybdenum-iron protein beta chain</fullName>
        <ecNumber>1.18.6.1</ecNumber>
    </recommendedName>
    <alternativeName>
        <fullName>Dinitrogenase</fullName>
    </alternativeName>
    <alternativeName>
        <fullName>Nitrogenase component I</fullName>
    </alternativeName>
</protein>
<reference key="1">
    <citation type="journal article" date="1995" name="Mol. Ecol.">
        <title>Molecular structure of the Frankia spp. nifD-K intergenic spacer and design of Frankia genus compatible primer.</title>
        <authorList>
            <person name="Nalin R."/>
            <person name="Domenach A.M."/>
            <person name="Normand P."/>
        </authorList>
    </citation>
    <scope>NUCLEOTIDE SEQUENCE [GENOMIC DNA]</scope>
    <source>
        <strain>ARI3</strain>
    </source>
</reference>
<reference key="2">
    <citation type="submission" date="1996-04" db="EMBL/GenBank/DDBJ databases">
        <authorList>
            <person name="Specq A."/>
            <person name="Normand P."/>
        </authorList>
    </citation>
    <scope>NUCLEOTIDE SEQUENCE [GENOMIC DNA]</scope>
    <source>
        <strain>ARI3</strain>
    </source>
</reference>
<organism>
    <name type="scientific">Frankia alni</name>
    <dbReference type="NCBI Taxonomy" id="1859"/>
    <lineage>
        <taxon>Bacteria</taxon>
        <taxon>Bacillati</taxon>
        <taxon>Actinomycetota</taxon>
        <taxon>Actinomycetes</taxon>
        <taxon>Frankiales</taxon>
        <taxon>Frankiaceae</taxon>
        <taxon>Frankia</taxon>
    </lineage>
</organism>
<feature type="chain" id="PRO_0000153099" description="Nitrogenase molybdenum-iron protein beta chain">
    <location>
        <begin position="1"/>
        <end position="528"/>
    </location>
</feature>
<feature type="binding site" evidence="1">
    <location>
        <position position="76"/>
    </location>
    <ligand>
        <name>[8Fe-7S] cluster</name>
        <dbReference type="ChEBI" id="CHEBI:21143"/>
        <note>ligand shared with alpha chain</note>
    </ligand>
</feature>
<feature type="binding site" evidence="1">
    <location>
        <position position="101"/>
    </location>
    <ligand>
        <name>[8Fe-7S] cluster</name>
        <dbReference type="ChEBI" id="CHEBI:21143"/>
        <note>ligand shared with alpha chain</note>
    </ligand>
</feature>
<feature type="binding site" evidence="1">
    <location>
        <position position="159"/>
    </location>
    <ligand>
        <name>[8Fe-7S] cluster</name>
        <dbReference type="ChEBI" id="CHEBI:21143"/>
        <note>ligand shared with alpha chain</note>
    </ligand>
</feature>
<feature type="binding site" evidence="1">
    <location>
        <position position="194"/>
    </location>
    <ligand>
        <name>[8Fe-7S] cluster</name>
        <dbReference type="ChEBI" id="CHEBI:21143"/>
        <note>ligand shared with alpha chain</note>
    </ligand>
</feature>
<sequence length="528" mass="58525">MTTTPEHTSAVPLRVLDHNDIFRDEVYQKQFEGKREFENAAPKEEVQRVLDWTRGWEYREKNFAREALTVNPAKACQPLGAVLAALGFEGTMPLVHGSQGCVAYFRSHFARHFKEPVPAASTSMTEDAAVFGGINNLVEAMENITALYKPKHIAVSTTCMAEVIGEDLFAYIGAAREQEAITQDFPVSYAHTPCFVGSHITGYDVMLKGILEMLAKSPDADASKVAKSDKVRLNVIPGFDTYIGNHREYKRILELMGVDPLILGDHSSSLDSPADGEYDLYPGGTPLAEGALAKFSRASLVLQESTLRRTAEYIEKDWKQETVLLETPLGVKGTDAFLTAVAKVAEVEVPAELTAERGRLVDAITDSHAYVHGKRVAIAGDPDLVIALTRFVLELGMIPVHIVSTNADTTFKARMEKVLSASKFGEEATVWPEKDLWHLRSLVFTEPVDLLIGSMQLKYISREANVPLVRVGFPIFDRHHLHRFPIIGYTGGLHLLTQLVNTILDEMDRNDPDHSFELRRRSLIGAAL</sequence>
<comment type="function">
    <text>This molybdenum-iron protein is part of the nitrogenase complex that catalyzes the key enzymatic reactions in nitrogen fixation.</text>
</comment>
<comment type="catalytic activity">
    <reaction>
        <text>N2 + 8 reduced [2Fe-2S]-[ferredoxin] + 16 ATP + 16 H2O = H2 + 8 oxidized [2Fe-2S]-[ferredoxin] + 2 NH4(+) + 16 ADP + 16 phosphate + 6 H(+)</text>
        <dbReference type="Rhea" id="RHEA:21448"/>
        <dbReference type="Rhea" id="RHEA-COMP:10000"/>
        <dbReference type="Rhea" id="RHEA-COMP:10001"/>
        <dbReference type="ChEBI" id="CHEBI:15377"/>
        <dbReference type="ChEBI" id="CHEBI:15378"/>
        <dbReference type="ChEBI" id="CHEBI:17997"/>
        <dbReference type="ChEBI" id="CHEBI:18276"/>
        <dbReference type="ChEBI" id="CHEBI:28938"/>
        <dbReference type="ChEBI" id="CHEBI:30616"/>
        <dbReference type="ChEBI" id="CHEBI:33737"/>
        <dbReference type="ChEBI" id="CHEBI:33738"/>
        <dbReference type="ChEBI" id="CHEBI:43474"/>
        <dbReference type="ChEBI" id="CHEBI:456216"/>
        <dbReference type="EC" id="1.18.6.1"/>
    </reaction>
</comment>
<comment type="cofactor">
    <cofactor evidence="1">
        <name>[8Fe-7S] cluster</name>
        <dbReference type="ChEBI" id="CHEBI:21143"/>
    </cofactor>
    <text evidence="1">Binds 1 [8Fe-7S] cluster per heterodimer.</text>
</comment>
<comment type="subunit">
    <text>Tetramer of two alpha and two beta chains. Forms complex with the iron protein (nitrogenase component 2).</text>
</comment>
<comment type="miscellaneous">
    <text>Cys-194 is present instead of the usual Ser that serves as a ligand for the 8Fe-7S cluster in the oxidized state.</text>
</comment>
<comment type="similarity">
    <text evidence="2">Belongs to the NifD/NifK/NifE/NifN family.</text>
</comment>
<accession>Q57118</accession>
<keyword id="KW-0067">ATP-binding</keyword>
<keyword id="KW-0408">Iron</keyword>
<keyword id="KW-0411">Iron-sulfur</keyword>
<keyword id="KW-0479">Metal-binding</keyword>
<keyword id="KW-0535">Nitrogen fixation</keyword>
<keyword id="KW-0547">Nucleotide-binding</keyword>
<keyword id="KW-0560">Oxidoreductase</keyword>
<dbReference type="EC" id="1.18.6.1"/>
<dbReference type="EMBL" id="L35557">
    <property type="protein sequence ID" value="AAB53116.1"/>
    <property type="molecule type" value="Genomic_DNA"/>
</dbReference>
<dbReference type="EMBL" id="L41344">
    <property type="protein sequence ID" value="AAA96264.1"/>
    <property type="molecule type" value="Genomic_DNA"/>
</dbReference>
<dbReference type="SMR" id="Q57118"/>
<dbReference type="GO" id="GO:0016612">
    <property type="term" value="C:molybdenum-iron nitrogenase complex"/>
    <property type="evidence" value="ECO:0007669"/>
    <property type="project" value="InterPro"/>
</dbReference>
<dbReference type="GO" id="GO:0005524">
    <property type="term" value="F:ATP binding"/>
    <property type="evidence" value="ECO:0007669"/>
    <property type="project" value="UniProtKB-KW"/>
</dbReference>
<dbReference type="GO" id="GO:0051536">
    <property type="term" value="F:iron-sulfur cluster binding"/>
    <property type="evidence" value="ECO:0007669"/>
    <property type="project" value="UniProtKB-KW"/>
</dbReference>
<dbReference type="GO" id="GO:0046872">
    <property type="term" value="F:metal ion binding"/>
    <property type="evidence" value="ECO:0007669"/>
    <property type="project" value="UniProtKB-KW"/>
</dbReference>
<dbReference type="GO" id="GO:0016163">
    <property type="term" value="F:nitrogenase activity"/>
    <property type="evidence" value="ECO:0007669"/>
    <property type="project" value="UniProtKB-EC"/>
</dbReference>
<dbReference type="GO" id="GO:0009399">
    <property type="term" value="P:nitrogen fixation"/>
    <property type="evidence" value="ECO:0007669"/>
    <property type="project" value="UniProtKB-KW"/>
</dbReference>
<dbReference type="CDD" id="cd01974">
    <property type="entry name" value="Nitrogenase_MoFe_beta"/>
    <property type="match status" value="1"/>
</dbReference>
<dbReference type="Gene3D" id="3.40.50.1980">
    <property type="entry name" value="Nitrogenase molybdenum iron protein domain"/>
    <property type="match status" value="3"/>
</dbReference>
<dbReference type="Gene3D" id="1.20.89.10">
    <property type="entry name" value="Nitrogenase Molybdenum-iron Protein, subunit B, domain 4"/>
    <property type="match status" value="1"/>
</dbReference>
<dbReference type="InterPro" id="IPR050152">
    <property type="entry name" value="ChlB/BchB/BchZ"/>
</dbReference>
<dbReference type="InterPro" id="IPR000510">
    <property type="entry name" value="Nase/OxRdtase_comp1"/>
</dbReference>
<dbReference type="InterPro" id="IPR000318">
    <property type="entry name" value="Nase_comp1_CS"/>
</dbReference>
<dbReference type="InterPro" id="IPR005976">
    <property type="entry name" value="Nase_Mo-Fe_CF_bsu"/>
</dbReference>
<dbReference type="InterPro" id="IPR024564">
    <property type="entry name" value="Nase_Mo-Fe_CF_bsu_N"/>
</dbReference>
<dbReference type="NCBIfam" id="TIGR01286">
    <property type="entry name" value="nifK"/>
    <property type="match status" value="1"/>
</dbReference>
<dbReference type="PANTHER" id="PTHR33712">
    <property type="entry name" value="LIGHT-INDEPENDENT PROTOCHLOROPHYLLIDE REDUCTASE SUBUNIT B"/>
    <property type="match status" value="1"/>
</dbReference>
<dbReference type="PANTHER" id="PTHR33712:SF7">
    <property type="entry name" value="LIGHT-INDEPENDENT PROTOCHLOROPHYLLIDE REDUCTASE SUBUNIT B"/>
    <property type="match status" value="1"/>
</dbReference>
<dbReference type="Pfam" id="PF11844">
    <property type="entry name" value="DUF3364"/>
    <property type="match status" value="1"/>
</dbReference>
<dbReference type="Pfam" id="PF00148">
    <property type="entry name" value="Oxidored_nitro"/>
    <property type="match status" value="1"/>
</dbReference>
<dbReference type="SUPFAM" id="SSF53807">
    <property type="entry name" value="Helical backbone' metal receptor"/>
    <property type="match status" value="1"/>
</dbReference>
<dbReference type="PROSITE" id="PS00699">
    <property type="entry name" value="NITROGENASE_1_1"/>
    <property type="match status" value="1"/>
</dbReference>
<proteinExistence type="inferred from homology"/>